<feature type="chain" id="PRO_0000297370" description="3-methyl-2-oxobutanoate hydroxymethyltransferase">
    <location>
        <begin position="1"/>
        <end position="264"/>
    </location>
</feature>
<feature type="active site" description="Proton acceptor" evidence="1">
    <location>
        <position position="181"/>
    </location>
</feature>
<feature type="binding site" evidence="1">
    <location>
        <begin position="45"/>
        <end position="46"/>
    </location>
    <ligand>
        <name>3-methyl-2-oxobutanoate</name>
        <dbReference type="ChEBI" id="CHEBI:11851"/>
    </ligand>
</feature>
<feature type="binding site" evidence="1">
    <location>
        <position position="45"/>
    </location>
    <ligand>
        <name>Mg(2+)</name>
        <dbReference type="ChEBI" id="CHEBI:18420"/>
    </ligand>
</feature>
<feature type="binding site" evidence="1">
    <location>
        <position position="84"/>
    </location>
    <ligand>
        <name>3-methyl-2-oxobutanoate</name>
        <dbReference type="ChEBI" id="CHEBI:11851"/>
    </ligand>
</feature>
<feature type="binding site" evidence="1">
    <location>
        <position position="84"/>
    </location>
    <ligand>
        <name>Mg(2+)</name>
        <dbReference type="ChEBI" id="CHEBI:18420"/>
    </ligand>
</feature>
<feature type="binding site" evidence="1">
    <location>
        <position position="112"/>
    </location>
    <ligand>
        <name>3-methyl-2-oxobutanoate</name>
        <dbReference type="ChEBI" id="CHEBI:11851"/>
    </ligand>
</feature>
<feature type="binding site" evidence="1">
    <location>
        <position position="114"/>
    </location>
    <ligand>
        <name>Mg(2+)</name>
        <dbReference type="ChEBI" id="CHEBI:18420"/>
    </ligand>
</feature>
<sequence>MSKITSSTLLKFKQEGKKFTALTAYDASFAGAFDSEGIDVLLVGDSLGMVLQGHDDTLPVTVEDIVYHTRCVRRGIKRSLLIADMPFMSYATPEQAMTNATALMQAGANMVKLEGGHWLLETVTKLTERGIPVCAHLGLTPQSVHVFGGFKVQGRDADNAQRIIDEAKAIEAAGAQLLVLECIPAALAKSITEALTIPVIGIGAGADTDGQILVMHDVLGISSGYIPRFSKNYLAQTGEIRSAIRAYIEEVDTGVFPAAEHTFS</sequence>
<evidence type="ECO:0000255" key="1">
    <source>
        <dbReference type="HAMAP-Rule" id="MF_00156"/>
    </source>
</evidence>
<comment type="function">
    <text evidence="1">Catalyzes the reversible reaction in which hydroxymethyl group from 5,10-methylenetetrahydrofolate is transferred onto alpha-ketoisovalerate to form ketopantoate.</text>
</comment>
<comment type="catalytic activity">
    <reaction evidence="1">
        <text>3-methyl-2-oxobutanoate + (6R)-5,10-methylene-5,6,7,8-tetrahydrofolate + H2O = 2-dehydropantoate + (6S)-5,6,7,8-tetrahydrofolate</text>
        <dbReference type="Rhea" id="RHEA:11824"/>
        <dbReference type="ChEBI" id="CHEBI:11561"/>
        <dbReference type="ChEBI" id="CHEBI:11851"/>
        <dbReference type="ChEBI" id="CHEBI:15377"/>
        <dbReference type="ChEBI" id="CHEBI:15636"/>
        <dbReference type="ChEBI" id="CHEBI:57453"/>
        <dbReference type="EC" id="2.1.2.11"/>
    </reaction>
</comment>
<comment type="cofactor">
    <cofactor evidence="1">
        <name>Mg(2+)</name>
        <dbReference type="ChEBI" id="CHEBI:18420"/>
    </cofactor>
    <text evidence="1">Binds 1 Mg(2+) ion per subunit.</text>
</comment>
<comment type="pathway">
    <text evidence="1">Cofactor biosynthesis; (R)-pantothenate biosynthesis; (R)-pantoate from 3-methyl-2-oxobutanoate: step 1/2.</text>
</comment>
<comment type="subunit">
    <text evidence="1">Homodecamer; pentamer of dimers.</text>
</comment>
<comment type="subcellular location">
    <subcellularLocation>
        <location evidence="1">Cytoplasm</location>
    </subcellularLocation>
</comment>
<comment type="similarity">
    <text evidence="1">Belongs to the PanB family.</text>
</comment>
<name>PANB_SHELP</name>
<protein>
    <recommendedName>
        <fullName evidence="1">3-methyl-2-oxobutanoate hydroxymethyltransferase</fullName>
        <ecNumber evidence="1">2.1.2.11</ecNumber>
    </recommendedName>
    <alternativeName>
        <fullName evidence="1">Ketopantoate hydroxymethyltransferase</fullName>
        <shortName evidence="1">KPHMT</shortName>
    </alternativeName>
</protein>
<dbReference type="EC" id="2.1.2.11" evidence="1"/>
<dbReference type="EMBL" id="CP000606">
    <property type="protein sequence ID" value="ABO24999.1"/>
    <property type="molecule type" value="Genomic_DNA"/>
</dbReference>
<dbReference type="RefSeq" id="WP_011866929.1">
    <property type="nucleotide sequence ID" value="NC_009092.1"/>
</dbReference>
<dbReference type="SMR" id="A3QHQ1"/>
<dbReference type="STRING" id="323850.Shew_3133"/>
<dbReference type="KEGG" id="slo:Shew_3133"/>
<dbReference type="eggNOG" id="COG0413">
    <property type="taxonomic scope" value="Bacteria"/>
</dbReference>
<dbReference type="HOGENOM" id="CLU_036645_1_0_6"/>
<dbReference type="OrthoDB" id="9781789at2"/>
<dbReference type="UniPathway" id="UPA00028">
    <property type="reaction ID" value="UER00003"/>
</dbReference>
<dbReference type="Proteomes" id="UP000001558">
    <property type="component" value="Chromosome"/>
</dbReference>
<dbReference type="GO" id="GO:0005737">
    <property type="term" value="C:cytoplasm"/>
    <property type="evidence" value="ECO:0007669"/>
    <property type="project" value="UniProtKB-SubCell"/>
</dbReference>
<dbReference type="GO" id="GO:0003864">
    <property type="term" value="F:3-methyl-2-oxobutanoate hydroxymethyltransferase activity"/>
    <property type="evidence" value="ECO:0007669"/>
    <property type="project" value="UniProtKB-UniRule"/>
</dbReference>
<dbReference type="GO" id="GO:0000287">
    <property type="term" value="F:magnesium ion binding"/>
    <property type="evidence" value="ECO:0007669"/>
    <property type="project" value="TreeGrafter"/>
</dbReference>
<dbReference type="GO" id="GO:0015940">
    <property type="term" value="P:pantothenate biosynthetic process"/>
    <property type="evidence" value="ECO:0007669"/>
    <property type="project" value="UniProtKB-UniRule"/>
</dbReference>
<dbReference type="CDD" id="cd06557">
    <property type="entry name" value="KPHMT-like"/>
    <property type="match status" value="1"/>
</dbReference>
<dbReference type="FunFam" id="3.20.20.60:FF:000003">
    <property type="entry name" value="3-methyl-2-oxobutanoate hydroxymethyltransferase"/>
    <property type="match status" value="1"/>
</dbReference>
<dbReference type="Gene3D" id="3.20.20.60">
    <property type="entry name" value="Phosphoenolpyruvate-binding domains"/>
    <property type="match status" value="1"/>
</dbReference>
<dbReference type="HAMAP" id="MF_00156">
    <property type="entry name" value="PanB"/>
    <property type="match status" value="1"/>
</dbReference>
<dbReference type="InterPro" id="IPR003700">
    <property type="entry name" value="Pantoate_hydroxy_MeTrfase"/>
</dbReference>
<dbReference type="InterPro" id="IPR015813">
    <property type="entry name" value="Pyrv/PenolPyrv_kinase-like_dom"/>
</dbReference>
<dbReference type="InterPro" id="IPR040442">
    <property type="entry name" value="Pyrv_kinase-like_dom_sf"/>
</dbReference>
<dbReference type="NCBIfam" id="TIGR00222">
    <property type="entry name" value="panB"/>
    <property type="match status" value="1"/>
</dbReference>
<dbReference type="NCBIfam" id="NF001452">
    <property type="entry name" value="PRK00311.1"/>
    <property type="match status" value="1"/>
</dbReference>
<dbReference type="PANTHER" id="PTHR20881">
    <property type="entry name" value="3-METHYL-2-OXOBUTANOATE HYDROXYMETHYLTRANSFERASE"/>
    <property type="match status" value="1"/>
</dbReference>
<dbReference type="PANTHER" id="PTHR20881:SF0">
    <property type="entry name" value="3-METHYL-2-OXOBUTANOATE HYDROXYMETHYLTRANSFERASE"/>
    <property type="match status" value="1"/>
</dbReference>
<dbReference type="Pfam" id="PF02548">
    <property type="entry name" value="Pantoate_transf"/>
    <property type="match status" value="1"/>
</dbReference>
<dbReference type="PIRSF" id="PIRSF000388">
    <property type="entry name" value="Pantoate_hydroxy_MeTrfase"/>
    <property type="match status" value="1"/>
</dbReference>
<dbReference type="SUPFAM" id="SSF51621">
    <property type="entry name" value="Phosphoenolpyruvate/pyruvate domain"/>
    <property type="match status" value="1"/>
</dbReference>
<gene>
    <name evidence="1" type="primary">panB</name>
    <name type="ordered locus">Shew_3133</name>
</gene>
<organism>
    <name type="scientific">Shewanella loihica (strain ATCC BAA-1088 / PV-4)</name>
    <dbReference type="NCBI Taxonomy" id="323850"/>
    <lineage>
        <taxon>Bacteria</taxon>
        <taxon>Pseudomonadati</taxon>
        <taxon>Pseudomonadota</taxon>
        <taxon>Gammaproteobacteria</taxon>
        <taxon>Alteromonadales</taxon>
        <taxon>Shewanellaceae</taxon>
        <taxon>Shewanella</taxon>
    </lineage>
</organism>
<reference key="1">
    <citation type="submission" date="2007-03" db="EMBL/GenBank/DDBJ databases">
        <title>Complete sequence of Shewanella loihica PV-4.</title>
        <authorList>
            <consortium name="US DOE Joint Genome Institute"/>
            <person name="Copeland A."/>
            <person name="Lucas S."/>
            <person name="Lapidus A."/>
            <person name="Barry K."/>
            <person name="Detter J.C."/>
            <person name="Glavina del Rio T."/>
            <person name="Hammon N."/>
            <person name="Israni S."/>
            <person name="Dalin E."/>
            <person name="Tice H."/>
            <person name="Pitluck S."/>
            <person name="Chain P."/>
            <person name="Malfatti S."/>
            <person name="Shin M."/>
            <person name="Vergez L."/>
            <person name="Schmutz J."/>
            <person name="Larimer F."/>
            <person name="Land M."/>
            <person name="Hauser L."/>
            <person name="Kyrpides N."/>
            <person name="Mikhailova N."/>
            <person name="Romine M.F."/>
            <person name="Serres G."/>
            <person name="Fredrickson J."/>
            <person name="Tiedje J."/>
            <person name="Richardson P."/>
        </authorList>
    </citation>
    <scope>NUCLEOTIDE SEQUENCE [LARGE SCALE GENOMIC DNA]</scope>
    <source>
        <strain>ATCC BAA-1088 / PV-4</strain>
    </source>
</reference>
<proteinExistence type="inferred from homology"/>
<keyword id="KW-0963">Cytoplasm</keyword>
<keyword id="KW-0460">Magnesium</keyword>
<keyword id="KW-0479">Metal-binding</keyword>
<keyword id="KW-0566">Pantothenate biosynthesis</keyword>
<keyword id="KW-1185">Reference proteome</keyword>
<keyword id="KW-0808">Transferase</keyword>
<accession>A3QHQ1</accession>